<sequence length="286" mass="32644">MKLIIVSGRSGSGKSTALHVLEDMGYYCIDNLPIGLLSPLTQEVLDQGKTQNQQLAVSIDARNLYRDLSDFPSIYAALQAHNIDVEIIYLDANDATLIKRFHATRRKHPLSSKSTSLKEAIAKEKQLLEPIATLANLYIDTSDLSIYQLRDQVKIRVIGHKTQELALLFQSFGFKHGVPSDSDMVFDVRCLPNPYWDTALRGYKGTDQEIIEFLKQHPEPEQMLQHIISFLETWIPHFQNSNRTYMTISIGCTGGQHRSVYICERLGEHFKKKYDNVQVRHKELAQ</sequence>
<reference key="1">
    <citation type="journal article" date="2005" name="Nucleic Acids Res.">
        <title>Genomic blueprint of Hahella chejuensis, a marine microbe producing an algicidal agent.</title>
        <authorList>
            <person name="Jeong H."/>
            <person name="Yim J.H."/>
            <person name="Lee C."/>
            <person name="Choi S.-H."/>
            <person name="Park Y.K."/>
            <person name="Yoon S.H."/>
            <person name="Hur C.-G."/>
            <person name="Kang H.-Y."/>
            <person name="Kim D."/>
            <person name="Lee H.H."/>
            <person name="Park K.H."/>
            <person name="Park S.-H."/>
            <person name="Park H.-S."/>
            <person name="Lee H.K."/>
            <person name="Oh T.K."/>
            <person name="Kim J.F."/>
        </authorList>
    </citation>
    <scope>NUCLEOTIDE SEQUENCE [LARGE SCALE GENOMIC DNA]</scope>
    <source>
        <strain>KCTC 2396</strain>
    </source>
</reference>
<organism>
    <name type="scientific">Hahella chejuensis (strain KCTC 2396)</name>
    <dbReference type="NCBI Taxonomy" id="349521"/>
    <lineage>
        <taxon>Bacteria</taxon>
        <taxon>Pseudomonadati</taxon>
        <taxon>Pseudomonadota</taxon>
        <taxon>Gammaproteobacteria</taxon>
        <taxon>Oceanospirillales</taxon>
        <taxon>Hahellaceae</taxon>
        <taxon>Hahella</taxon>
    </lineage>
</organism>
<dbReference type="EMBL" id="CP000155">
    <property type="protein sequence ID" value="ABC31996.1"/>
    <property type="molecule type" value="Genomic_DNA"/>
</dbReference>
<dbReference type="RefSeq" id="WP_011399060.1">
    <property type="nucleotide sequence ID" value="NC_007645.1"/>
</dbReference>
<dbReference type="SMR" id="Q2SBH8"/>
<dbReference type="STRING" id="349521.HCH_05324"/>
<dbReference type="KEGG" id="hch:HCH_05324"/>
<dbReference type="eggNOG" id="COG1660">
    <property type="taxonomic scope" value="Bacteria"/>
</dbReference>
<dbReference type="HOGENOM" id="CLU_059558_1_1_6"/>
<dbReference type="OrthoDB" id="9784461at2"/>
<dbReference type="Proteomes" id="UP000000238">
    <property type="component" value="Chromosome"/>
</dbReference>
<dbReference type="GO" id="GO:0005524">
    <property type="term" value="F:ATP binding"/>
    <property type="evidence" value="ECO:0007669"/>
    <property type="project" value="UniProtKB-UniRule"/>
</dbReference>
<dbReference type="GO" id="GO:0005525">
    <property type="term" value="F:GTP binding"/>
    <property type="evidence" value="ECO:0007669"/>
    <property type="project" value="UniProtKB-UniRule"/>
</dbReference>
<dbReference type="Gene3D" id="3.40.50.300">
    <property type="entry name" value="P-loop containing nucleotide triphosphate hydrolases"/>
    <property type="match status" value="1"/>
</dbReference>
<dbReference type="HAMAP" id="MF_00636">
    <property type="entry name" value="RapZ_like"/>
    <property type="match status" value="1"/>
</dbReference>
<dbReference type="InterPro" id="IPR027417">
    <property type="entry name" value="P-loop_NTPase"/>
</dbReference>
<dbReference type="InterPro" id="IPR005337">
    <property type="entry name" value="RapZ-like"/>
</dbReference>
<dbReference type="InterPro" id="IPR053930">
    <property type="entry name" value="RapZ-like_N"/>
</dbReference>
<dbReference type="InterPro" id="IPR053931">
    <property type="entry name" value="RapZ_C"/>
</dbReference>
<dbReference type="NCBIfam" id="NF003828">
    <property type="entry name" value="PRK05416.1"/>
    <property type="match status" value="1"/>
</dbReference>
<dbReference type="PANTHER" id="PTHR30448">
    <property type="entry name" value="RNASE ADAPTER PROTEIN RAPZ"/>
    <property type="match status" value="1"/>
</dbReference>
<dbReference type="PANTHER" id="PTHR30448:SF0">
    <property type="entry name" value="RNASE ADAPTER PROTEIN RAPZ"/>
    <property type="match status" value="1"/>
</dbReference>
<dbReference type="Pfam" id="PF22740">
    <property type="entry name" value="PapZ_C"/>
    <property type="match status" value="1"/>
</dbReference>
<dbReference type="Pfam" id="PF03668">
    <property type="entry name" value="RapZ-like_N"/>
    <property type="match status" value="1"/>
</dbReference>
<dbReference type="PIRSF" id="PIRSF005052">
    <property type="entry name" value="P-loopkin"/>
    <property type="match status" value="1"/>
</dbReference>
<dbReference type="SUPFAM" id="SSF52540">
    <property type="entry name" value="P-loop containing nucleoside triphosphate hydrolases"/>
    <property type="match status" value="1"/>
</dbReference>
<name>Y5324_HAHCH</name>
<accession>Q2SBH8</accession>
<protein>
    <recommendedName>
        <fullName evidence="1">Nucleotide-binding protein HCH_05324</fullName>
    </recommendedName>
</protein>
<gene>
    <name type="ordered locus">HCH_05324</name>
</gene>
<feature type="chain" id="PRO_0000258967" description="Nucleotide-binding protein HCH_05324">
    <location>
        <begin position="1"/>
        <end position="286"/>
    </location>
</feature>
<feature type="binding site" evidence="1">
    <location>
        <begin position="8"/>
        <end position="15"/>
    </location>
    <ligand>
        <name>ATP</name>
        <dbReference type="ChEBI" id="CHEBI:30616"/>
    </ligand>
</feature>
<feature type="binding site" evidence="1">
    <location>
        <begin position="60"/>
        <end position="63"/>
    </location>
    <ligand>
        <name>GTP</name>
        <dbReference type="ChEBI" id="CHEBI:37565"/>
    </ligand>
</feature>
<comment type="function">
    <text evidence="1">Displays ATPase and GTPase activities.</text>
</comment>
<comment type="similarity">
    <text evidence="1">Belongs to the RapZ-like family.</text>
</comment>
<keyword id="KW-0067">ATP-binding</keyword>
<keyword id="KW-0342">GTP-binding</keyword>
<keyword id="KW-0547">Nucleotide-binding</keyword>
<keyword id="KW-1185">Reference proteome</keyword>
<proteinExistence type="inferred from homology"/>
<evidence type="ECO:0000255" key="1">
    <source>
        <dbReference type="HAMAP-Rule" id="MF_00636"/>
    </source>
</evidence>